<feature type="chain" id="PRO_0000320900" description="Protein translocase subunit SecA">
    <location>
        <begin position="1"/>
        <end position="911"/>
    </location>
</feature>
<feature type="region of interest" description="Disordered" evidence="2">
    <location>
        <begin position="861"/>
        <end position="893"/>
    </location>
</feature>
<feature type="binding site" evidence="1">
    <location>
        <position position="87"/>
    </location>
    <ligand>
        <name>ATP</name>
        <dbReference type="ChEBI" id="CHEBI:30616"/>
    </ligand>
</feature>
<feature type="binding site" evidence="1">
    <location>
        <begin position="105"/>
        <end position="109"/>
    </location>
    <ligand>
        <name>ATP</name>
        <dbReference type="ChEBI" id="CHEBI:30616"/>
    </ligand>
</feature>
<feature type="binding site" evidence="1">
    <location>
        <position position="512"/>
    </location>
    <ligand>
        <name>ATP</name>
        <dbReference type="ChEBI" id="CHEBI:30616"/>
    </ligand>
</feature>
<feature type="binding site" evidence="1">
    <location>
        <position position="895"/>
    </location>
    <ligand>
        <name>Zn(2+)</name>
        <dbReference type="ChEBI" id="CHEBI:29105"/>
    </ligand>
</feature>
<feature type="binding site" evidence="1">
    <location>
        <position position="897"/>
    </location>
    <ligand>
        <name>Zn(2+)</name>
        <dbReference type="ChEBI" id="CHEBI:29105"/>
    </ligand>
</feature>
<feature type="binding site" evidence="1">
    <location>
        <position position="906"/>
    </location>
    <ligand>
        <name>Zn(2+)</name>
        <dbReference type="ChEBI" id="CHEBI:29105"/>
    </ligand>
</feature>
<feature type="binding site" evidence="1">
    <location>
        <position position="907"/>
    </location>
    <ligand>
        <name>Zn(2+)</name>
        <dbReference type="ChEBI" id="CHEBI:29105"/>
    </ligand>
</feature>
<dbReference type="EC" id="7.4.2.8" evidence="1"/>
<dbReference type="EMBL" id="CP000712">
    <property type="protein sequence ID" value="ABQ80502.1"/>
    <property type="status" value="ALT_INIT"/>
    <property type="molecule type" value="Genomic_DNA"/>
</dbReference>
<dbReference type="SMR" id="A5W8P2"/>
<dbReference type="KEGG" id="ppf:Pput_4379"/>
<dbReference type="eggNOG" id="COG0653">
    <property type="taxonomic scope" value="Bacteria"/>
</dbReference>
<dbReference type="HOGENOM" id="CLU_005314_3_0_6"/>
<dbReference type="GO" id="GO:0031522">
    <property type="term" value="C:cell envelope Sec protein transport complex"/>
    <property type="evidence" value="ECO:0007669"/>
    <property type="project" value="TreeGrafter"/>
</dbReference>
<dbReference type="GO" id="GO:0005829">
    <property type="term" value="C:cytosol"/>
    <property type="evidence" value="ECO:0007669"/>
    <property type="project" value="TreeGrafter"/>
</dbReference>
<dbReference type="GO" id="GO:0005886">
    <property type="term" value="C:plasma membrane"/>
    <property type="evidence" value="ECO:0007669"/>
    <property type="project" value="UniProtKB-SubCell"/>
</dbReference>
<dbReference type="GO" id="GO:0005524">
    <property type="term" value="F:ATP binding"/>
    <property type="evidence" value="ECO:0007669"/>
    <property type="project" value="UniProtKB-UniRule"/>
</dbReference>
<dbReference type="GO" id="GO:0046872">
    <property type="term" value="F:metal ion binding"/>
    <property type="evidence" value="ECO:0007669"/>
    <property type="project" value="UniProtKB-KW"/>
</dbReference>
<dbReference type="GO" id="GO:0008564">
    <property type="term" value="F:protein-exporting ATPase activity"/>
    <property type="evidence" value="ECO:0007669"/>
    <property type="project" value="UniProtKB-EC"/>
</dbReference>
<dbReference type="GO" id="GO:0065002">
    <property type="term" value="P:intracellular protein transmembrane transport"/>
    <property type="evidence" value="ECO:0007669"/>
    <property type="project" value="UniProtKB-UniRule"/>
</dbReference>
<dbReference type="GO" id="GO:0017038">
    <property type="term" value="P:protein import"/>
    <property type="evidence" value="ECO:0007669"/>
    <property type="project" value="InterPro"/>
</dbReference>
<dbReference type="GO" id="GO:0006605">
    <property type="term" value="P:protein targeting"/>
    <property type="evidence" value="ECO:0007669"/>
    <property type="project" value="UniProtKB-UniRule"/>
</dbReference>
<dbReference type="GO" id="GO:0043952">
    <property type="term" value="P:protein transport by the Sec complex"/>
    <property type="evidence" value="ECO:0007669"/>
    <property type="project" value="TreeGrafter"/>
</dbReference>
<dbReference type="CDD" id="cd17928">
    <property type="entry name" value="DEXDc_SecA"/>
    <property type="match status" value="1"/>
</dbReference>
<dbReference type="CDD" id="cd18803">
    <property type="entry name" value="SF2_C_secA"/>
    <property type="match status" value="1"/>
</dbReference>
<dbReference type="FunFam" id="3.40.50.300:FF:000081">
    <property type="entry name" value="Preprotein translocase subunit SecA"/>
    <property type="match status" value="1"/>
</dbReference>
<dbReference type="FunFam" id="3.40.50.300:FF:000113">
    <property type="entry name" value="Preprotein translocase subunit SecA"/>
    <property type="match status" value="1"/>
</dbReference>
<dbReference type="FunFam" id="3.90.1440.10:FF:000001">
    <property type="entry name" value="Preprotein translocase subunit SecA"/>
    <property type="match status" value="1"/>
</dbReference>
<dbReference type="FunFam" id="1.10.3060.10:FF:000003">
    <property type="entry name" value="Protein translocase subunit SecA"/>
    <property type="match status" value="1"/>
</dbReference>
<dbReference type="Gene3D" id="1.10.3060.10">
    <property type="entry name" value="Helical scaffold and wing domains of SecA"/>
    <property type="match status" value="1"/>
</dbReference>
<dbReference type="Gene3D" id="3.40.50.300">
    <property type="entry name" value="P-loop containing nucleotide triphosphate hydrolases"/>
    <property type="match status" value="2"/>
</dbReference>
<dbReference type="Gene3D" id="3.90.1440.10">
    <property type="entry name" value="SecA, preprotein cross-linking domain"/>
    <property type="match status" value="1"/>
</dbReference>
<dbReference type="HAMAP" id="MF_01382">
    <property type="entry name" value="SecA"/>
    <property type="match status" value="1"/>
</dbReference>
<dbReference type="InterPro" id="IPR014001">
    <property type="entry name" value="Helicase_ATP-bd"/>
</dbReference>
<dbReference type="InterPro" id="IPR001650">
    <property type="entry name" value="Helicase_C-like"/>
</dbReference>
<dbReference type="InterPro" id="IPR027417">
    <property type="entry name" value="P-loop_NTPase"/>
</dbReference>
<dbReference type="InterPro" id="IPR004027">
    <property type="entry name" value="SEC_C_motif"/>
</dbReference>
<dbReference type="InterPro" id="IPR000185">
    <property type="entry name" value="SecA"/>
</dbReference>
<dbReference type="InterPro" id="IPR011115">
    <property type="entry name" value="SecA_DEAD"/>
</dbReference>
<dbReference type="InterPro" id="IPR014018">
    <property type="entry name" value="SecA_motor_DEAD"/>
</dbReference>
<dbReference type="InterPro" id="IPR011130">
    <property type="entry name" value="SecA_preprotein_X-link_dom"/>
</dbReference>
<dbReference type="InterPro" id="IPR044722">
    <property type="entry name" value="SecA_SF2_C"/>
</dbReference>
<dbReference type="InterPro" id="IPR011116">
    <property type="entry name" value="SecA_Wing/Scaffold"/>
</dbReference>
<dbReference type="InterPro" id="IPR036266">
    <property type="entry name" value="SecA_Wing/Scaffold_sf"/>
</dbReference>
<dbReference type="InterPro" id="IPR036670">
    <property type="entry name" value="SecA_X-link_sf"/>
</dbReference>
<dbReference type="NCBIfam" id="NF009538">
    <property type="entry name" value="PRK12904.1"/>
    <property type="match status" value="1"/>
</dbReference>
<dbReference type="NCBIfam" id="TIGR00963">
    <property type="entry name" value="secA"/>
    <property type="match status" value="1"/>
</dbReference>
<dbReference type="PANTHER" id="PTHR30612:SF0">
    <property type="entry name" value="CHLOROPLAST PROTEIN-TRANSPORTING ATPASE"/>
    <property type="match status" value="1"/>
</dbReference>
<dbReference type="PANTHER" id="PTHR30612">
    <property type="entry name" value="SECA INNER MEMBRANE COMPONENT OF SEC PROTEIN SECRETION SYSTEM"/>
    <property type="match status" value="1"/>
</dbReference>
<dbReference type="Pfam" id="PF21090">
    <property type="entry name" value="P-loop_SecA"/>
    <property type="match status" value="1"/>
</dbReference>
<dbReference type="Pfam" id="PF02810">
    <property type="entry name" value="SEC-C"/>
    <property type="match status" value="1"/>
</dbReference>
<dbReference type="Pfam" id="PF07517">
    <property type="entry name" value="SecA_DEAD"/>
    <property type="match status" value="1"/>
</dbReference>
<dbReference type="Pfam" id="PF01043">
    <property type="entry name" value="SecA_PP_bind"/>
    <property type="match status" value="1"/>
</dbReference>
<dbReference type="Pfam" id="PF07516">
    <property type="entry name" value="SecA_SW"/>
    <property type="match status" value="1"/>
</dbReference>
<dbReference type="PRINTS" id="PR00906">
    <property type="entry name" value="SECA"/>
</dbReference>
<dbReference type="SMART" id="SM00957">
    <property type="entry name" value="SecA_DEAD"/>
    <property type="match status" value="1"/>
</dbReference>
<dbReference type="SMART" id="SM00958">
    <property type="entry name" value="SecA_PP_bind"/>
    <property type="match status" value="1"/>
</dbReference>
<dbReference type="SUPFAM" id="SSF81886">
    <property type="entry name" value="Helical scaffold and wing domains of SecA"/>
    <property type="match status" value="1"/>
</dbReference>
<dbReference type="SUPFAM" id="SSF52540">
    <property type="entry name" value="P-loop containing nucleoside triphosphate hydrolases"/>
    <property type="match status" value="2"/>
</dbReference>
<dbReference type="SUPFAM" id="SSF81767">
    <property type="entry name" value="Pre-protein crosslinking domain of SecA"/>
    <property type="match status" value="1"/>
</dbReference>
<dbReference type="PROSITE" id="PS51196">
    <property type="entry name" value="SECA_MOTOR_DEAD"/>
    <property type="match status" value="1"/>
</dbReference>
<organism>
    <name type="scientific">Pseudomonas putida (strain ATCC 700007 / DSM 6899 / JCM 31910 / BCRC 17059 / LMG 24140 / F1)</name>
    <dbReference type="NCBI Taxonomy" id="351746"/>
    <lineage>
        <taxon>Bacteria</taxon>
        <taxon>Pseudomonadati</taxon>
        <taxon>Pseudomonadota</taxon>
        <taxon>Gammaproteobacteria</taxon>
        <taxon>Pseudomonadales</taxon>
        <taxon>Pseudomonadaceae</taxon>
        <taxon>Pseudomonas</taxon>
    </lineage>
</organism>
<protein>
    <recommendedName>
        <fullName evidence="1">Protein translocase subunit SecA</fullName>
        <ecNumber evidence="1">7.4.2.8</ecNumber>
    </recommendedName>
</protein>
<keyword id="KW-0067">ATP-binding</keyword>
<keyword id="KW-0997">Cell inner membrane</keyword>
<keyword id="KW-1003">Cell membrane</keyword>
<keyword id="KW-0963">Cytoplasm</keyword>
<keyword id="KW-0472">Membrane</keyword>
<keyword id="KW-0479">Metal-binding</keyword>
<keyword id="KW-0547">Nucleotide-binding</keyword>
<keyword id="KW-0653">Protein transport</keyword>
<keyword id="KW-1278">Translocase</keyword>
<keyword id="KW-0811">Translocation</keyword>
<keyword id="KW-0813">Transport</keyword>
<keyword id="KW-0862">Zinc</keyword>
<sequence>MFAPLLKKLFGSKNEREVKRMLKTVSIVNAFEEKMVALSDEQLRGKTAEFKERLAKGETLDQLLPEAFAVAREAGKRVMGMRHFDVQLIGGMTLHEGMIAEMRTGEGKTLVGTLAVYLNALSGKGVHVVTVNDYLARRDANWMRPLYEFLGLSVGIVSAFQPPEEKRAAYAADITYGTNNEFGFDYLRDNMAFSQDEKFQRELNFAVIDEVDSILIDEARTPLIISGQAEDSSKLYIEINRLIPRLTQHIEEVEGQVTQEGHFTIDEKSRQVELNEAGHQFIEEMLAQAGLLAEGESLYSAHNLGLLTHVYAGLRAHKLFHRNVEYIVQDGQVLLIDEHTGRTMPGRRLSEGLHQAIEAKENLNIQAESQTLASTTFQNYFRLYTKLSGMTGTADTEAFEFQSIYGLNVMVIPPNKPLARKDYNDLVYLTADEKYAAIIADIKESMKLGRPVLVGTATIETSEHMSNLLKKEGIDHKVLNAKYHEKEAEIIAQAGAPGALTIATNMAGRGTDILLGGNWEAEVAALENPTAEQIAQIKADWQKRHQQVIETGGLHVIASERHESRRIDNQLRGRSGRQGDPGSSRFYLSLEDSLMRIFASDRVKNFMKALGMQSGEAIEHRMVTNAIEKAQRKVEGRNFDIRKQLLEYDDVANEQRKVIYHMRNSLLAAENIGDTIVEFRKEVLDATISQHIPPQSLPEQWDVAGLEASLASDFAIKLPIQQWLDEDDHLYEETLREKLLSEITTAYTEKEDQAGLDALRTFEKQILLRVLDDLWKDHLSTMDHLRHGIHLRGYAQKNPKQEYKRESFSLFQELLESIKRDTIRVLSHVQVRREDPAEEEARLRREAEELASRMQFQHAAAPGLESEQLSEEGAEVAVASAPVRNDQKLGRNEPCWCGSGKKFKHCHGQIE</sequence>
<evidence type="ECO:0000255" key="1">
    <source>
        <dbReference type="HAMAP-Rule" id="MF_01382"/>
    </source>
</evidence>
<evidence type="ECO:0000256" key="2">
    <source>
        <dbReference type="SAM" id="MobiDB-lite"/>
    </source>
</evidence>
<evidence type="ECO:0000305" key="3"/>
<name>SECA_PSEP1</name>
<comment type="function">
    <text evidence="1">Part of the Sec protein translocase complex. Interacts with the SecYEG preprotein conducting channel. Has a central role in coupling the hydrolysis of ATP to the transfer of proteins into and across the cell membrane, serving both as a receptor for the preprotein-SecB complex and as an ATP-driven molecular motor driving the stepwise translocation of polypeptide chains across the membrane.</text>
</comment>
<comment type="catalytic activity">
    <reaction evidence="1">
        <text>ATP + H2O + cellular proteinSide 1 = ADP + phosphate + cellular proteinSide 2.</text>
        <dbReference type="EC" id="7.4.2.8"/>
    </reaction>
</comment>
<comment type="cofactor">
    <cofactor evidence="1">
        <name>Zn(2+)</name>
        <dbReference type="ChEBI" id="CHEBI:29105"/>
    </cofactor>
    <text evidence="1">May bind 1 zinc ion per subunit.</text>
</comment>
<comment type="subunit">
    <text evidence="1">Monomer and homodimer. Part of the essential Sec protein translocation apparatus which comprises SecA, SecYEG and auxiliary proteins SecDF-YajC and YidC.</text>
</comment>
<comment type="subcellular location">
    <subcellularLocation>
        <location evidence="1">Cell inner membrane</location>
        <topology evidence="1">Peripheral membrane protein</topology>
        <orientation evidence="1">Cytoplasmic side</orientation>
    </subcellularLocation>
    <subcellularLocation>
        <location evidence="1">Cytoplasm</location>
    </subcellularLocation>
    <text evidence="1">Distribution is 50-50.</text>
</comment>
<comment type="similarity">
    <text evidence="1">Belongs to the SecA family.</text>
</comment>
<comment type="sequence caution" evidence="3">
    <conflict type="erroneous initiation">
        <sequence resource="EMBL-CDS" id="ABQ80502"/>
    </conflict>
    <text>Extended N-terminus.</text>
</comment>
<gene>
    <name evidence="1" type="primary">secA</name>
    <name type="ordered locus">Pput_4379</name>
</gene>
<proteinExistence type="inferred from homology"/>
<reference key="1">
    <citation type="submission" date="2007-05" db="EMBL/GenBank/DDBJ databases">
        <title>Complete sequence of Pseudomonas putida F1.</title>
        <authorList>
            <consortium name="US DOE Joint Genome Institute"/>
            <person name="Copeland A."/>
            <person name="Lucas S."/>
            <person name="Lapidus A."/>
            <person name="Barry K."/>
            <person name="Detter J.C."/>
            <person name="Glavina del Rio T."/>
            <person name="Hammon N."/>
            <person name="Israni S."/>
            <person name="Dalin E."/>
            <person name="Tice H."/>
            <person name="Pitluck S."/>
            <person name="Chain P."/>
            <person name="Malfatti S."/>
            <person name="Shin M."/>
            <person name="Vergez L."/>
            <person name="Schmutz J."/>
            <person name="Larimer F."/>
            <person name="Land M."/>
            <person name="Hauser L."/>
            <person name="Kyrpides N."/>
            <person name="Lykidis A."/>
            <person name="Parales R."/>
            <person name="Richardson P."/>
        </authorList>
    </citation>
    <scope>NUCLEOTIDE SEQUENCE [LARGE SCALE GENOMIC DNA]</scope>
    <source>
        <strain>ATCC 700007 / DSM 6899 / JCM 31910 / BCRC 17059 / LMG 24140 / F1</strain>
    </source>
</reference>
<accession>A5W8P2</accession>